<gene>
    <name evidence="1" type="primary">rplM</name>
    <name type="ordered locus">BP2962</name>
</gene>
<organism>
    <name type="scientific">Bordetella pertussis (strain Tohama I / ATCC BAA-589 / NCTC 13251)</name>
    <dbReference type="NCBI Taxonomy" id="257313"/>
    <lineage>
        <taxon>Bacteria</taxon>
        <taxon>Pseudomonadati</taxon>
        <taxon>Pseudomonadota</taxon>
        <taxon>Betaproteobacteria</taxon>
        <taxon>Burkholderiales</taxon>
        <taxon>Alcaligenaceae</taxon>
        <taxon>Bordetella</taxon>
    </lineage>
</organism>
<accession>Q7VUV8</accession>
<proteinExistence type="inferred from homology"/>
<sequence>MKTFVAKPHEVKRDWFVIDAKGKVLGRVASEVAHRLRGKHKPEFTPHVDTGDYIVIINAADIVVTGNKAQDKKYFRHTTYPGGIRETNFEKMQQRFPGRAIQKAVKGMLPKGPLGYAMIKKLKVYAGAEHPHTAQQPKPLEF</sequence>
<dbReference type="EMBL" id="BX640420">
    <property type="protein sequence ID" value="CAE43234.1"/>
    <property type="molecule type" value="Genomic_DNA"/>
</dbReference>
<dbReference type="RefSeq" id="NP_881541.1">
    <property type="nucleotide sequence ID" value="NC_002929.2"/>
</dbReference>
<dbReference type="RefSeq" id="WP_010927106.1">
    <property type="nucleotide sequence ID" value="NZ_CP039022.1"/>
</dbReference>
<dbReference type="SMR" id="Q7VUV8"/>
<dbReference type="STRING" id="257313.BP2962"/>
<dbReference type="PaxDb" id="257313-BP2962"/>
<dbReference type="GeneID" id="93205684"/>
<dbReference type="KEGG" id="bpe:BP2962"/>
<dbReference type="PATRIC" id="fig|257313.5.peg.3204"/>
<dbReference type="eggNOG" id="COG0102">
    <property type="taxonomic scope" value="Bacteria"/>
</dbReference>
<dbReference type="HOGENOM" id="CLU_082184_2_2_4"/>
<dbReference type="Proteomes" id="UP000002676">
    <property type="component" value="Chromosome"/>
</dbReference>
<dbReference type="GO" id="GO:0022625">
    <property type="term" value="C:cytosolic large ribosomal subunit"/>
    <property type="evidence" value="ECO:0007669"/>
    <property type="project" value="TreeGrafter"/>
</dbReference>
<dbReference type="GO" id="GO:0003729">
    <property type="term" value="F:mRNA binding"/>
    <property type="evidence" value="ECO:0007669"/>
    <property type="project" value="TreeGrafter"/>
</dbReference>
<dbReference type="GO" id="GO:0003735">
    <property type="term" value="F:structural constituent of ribosome"/>
    <property type="evidence" value="ECO:0007669"/>
    <property type="project" value="InterPro"/>
</dbReference>
<dbReference type="GO" id="GO:0017148">
    <property type="term" value="P:negative regulation of translation"/>
    <property type="evidence" value="ECO:0007669"/>
    <property type="project" value="TreeGrafter"/>
</dbReference>
<dbReference type="GO" id="GO:0006412">
    <property type="term" value="P:translation"/>
    <property type="evidence" value="ECO:0007669"/>
    <property type="project" value="UniProtKB-UniRule"/>
</dbReference>
<dbReference type="CDD" id="cd00392">
    <property type="entry name" value="Ribosomal_L13"/>
    <property type="match status" value="1"/>
</dbReference>
<dbReference type="FunFam" id="3.90.1180.10:FF:000001">
    <property type="entry name" value="50S ribosomal protein L13"/>
    <property type="match status" value="1"/>
</dbReference>
<dbReference type="Gene3D" id="3.90.1180.10">
    <property type="entry name" value="Ribosomal protein L13"/>
    <property type="match status" value="1"/>
</dbReference>
<dbReference type="HAMAP" id="MF_01366">
    <property type="entry name" value="Ribosomal_uL13"/>
    <property type="match status" value="1"/>
</dbReference>
<dbReference type="InterPro" id="IPR005822">
    <property type="entry name" value="Ribosomal_uL13"/>
</dbReference>
<dbReference type="InterPro" id="IPR005823">
    <property type="entry name" value="Ribosomal_uL13_bac-type"/>
</dbReference>
<dbReference type="InterPro" id="IPR036899">
    <property type="entry name" value="Ribosomal_uL13_sf"/>
</dbReference>
<dbReference type="NCBIfam" id="TIGR01066">
    <property type="entry name" value="rplM_bact"/>
    <property type="match status" value="1"/>
</dbReference>
<dbReference type="PANTHER" id="PTHR11545:SF2">
    <property type="entry name" value="LARGE RIBOSOMAL SUBUNIT PROTEIN UL13M"/>
    <property type="match status" value="1"/>
</dbReference>
<dbReference type="PANTHER" id="PTHR11545">
    <property type="entry name" value="RIBOSOMAL PROTEIN L13"/>
    <property type="match status" value="1"/>
</dbReference>
<dbReference type="Pfam" id="PF00572">
    <property type="entry name" value="Ribosomal_L13"/>
    <property type="match status" value="1"/>
</dbReference>
<dbReference type="PIRSF" id="PIRSF002181">
    <property type="entry name" value="Ribosomal_L13"/>
    <property type="match status" value="1"/>
</dbReference>
<dbReference type="SUPFAM" id="SSF52161">
    <property type="entry name" value="Ribosomal protein L13"/>
    <property type="match status" value="1"/>
</dbReference>
<evidence type="ECO:0000255" key="1">
    <source>
        <dbReference type="HAMAP-Rule" id="MF_01366"/>
    </source>
</evidence>
<evidence type="ECO:0000305" key="2"/>
<keyword id="KW-1185">Reference proteome</keyword>
<keyword id="KW-0687">Ribonucleoprotein</keyword>
<keyword id="KW-0689">Ribosomal protein</keyword>
<feature type="chain" id="PRO_0000261694" description="Large ribosomal subunit protein uL13">
    <location>
        <begin position="1"/>
        <end position="142"/>
    </location>
</feature>
<comment type="function">
    <text evidence="1">This protein is one of the early assembly proteins of the 50S ribosomal subunit, although it is not seen to bind rRNA by itself. It is important during the early stages of 50S assembly.</text>
</comment>
<comment type="subunit">
    <text evidence="1">Part of the 50S ribosomal subunit.</text>
</comment>
<comment type="similarity">
    <text evidence="1">Belongs to the universal ribosomal protein uL13 family.</text>
</comment>
<name>RL13_BORPE</name>
<protein>
    <recommendedName>
        <fullName evidence="1">Large ribosomal subunit protein uL13</fullName>
    </recommendedName>
    <alternativeName>
        <fullName evidence="2">50S ribosomal protein L13</fullName>
    </alternativeName>
</protein>
<reference key="1">
    <citation type="journal article" date="2003" name="Nat. Genet.">
        <title>Comparative analysis of the genome sequences of Bordetella pertussis, Bordetella parapertussis and Bordetella bronchiseptica.</title>
        <authorList>
            <person name="Parkhill J."/>
            <person name="Sebaihia M."/>
            <person name="Preston A."/>
            <person name="Murphy L.D."/>
            <person name="Thomson N.R."/>
            <person name="Harris D.E."/>
            <person name="Holden M.T.G."/>
            <person name="Churcher C.M."/>
            <person name="Bentley S.D."/>
            <person name="Mungall K.L."/>
            <person name="Cerdeno-Tarraga A.-M."/>
            <person name="Temple L."/>
            <person name="James K.D."/>
            <person name="Harris B."/>
            <person name="Quail M.A."/>
            <person name="Achtman M."/>
            <person name="Atkin R."/>
            <person name="Baker S."/>
            <person name="Basham D."/>
            <person name="Bason N."/>
            <person name="Cherevach I."/>
            <person name="Chillingworth T."/>
            <person name="Collins M."/>
            <person name="Cronin A."/>
            <person name="Davis P."/>
            <person name="Doggett J."/>
            <person name="Feltwell T."/>
            <person name="Goble A."/>
            <person name="Hamlin N."/>
            <person name="Hauser H."/>
            <person name="Holroyd S."/>
            <person name="Jagels K."/>
            <person name="Leather S."/>
            <person name="Moule S."/>
            <person name="Norberczak H."/>
            <person name="O'Neil S."/>
            <person name="Ormond D."/>
            <person name="Price C."/>
            <person name="Rabbinowitsch E."/>
            <person name="Rutter S."/>
            <person name="Sanders M."/>
            <person name="Saunders D."/>
            <person name="Seeger K."/>
            <person name="Sharp S."/>
            <person name="Simmonds M."/>
            <person name="Skelton J."/>
            <person name="Squares R."/>
            <person name="Squares S."/>
            <person name="Stevens K."/>
            <person name="Unwin L."/>
            <person name="Whitehead S."/>
            <person name="Barrell B.G."/>
            <person name="Maskell D.J."/>
        </authorList>
    </citation>
    <scope>NUCLEOTIDE SEQUENCE [LARGE SCALE GENOMIC DNA]</scope>
    <source>
        <strain>Tohama I / ATCC BAA-589 / NCTC 13251</strain>
    </source>
</reference>